<protein>
    <recommendedName>
        <fullName evidence="1">Acetyl-coenzyme A carboxylase carboxyl transferase subunit beta</fullName>
        <shortName evidence="1">ACCase subunit beta</shortName>
        <shortName evidence="1">Acetyl-CoA carboxylase carboxyltransferase subunit beta</shortName>
        <ecNumber evidence="1">2.1.3.15</ecNumber>
    </recommendedName>
</protein>
<dbReference type="EC" id="2.1.3.15" evidence="1"/>
<dbReference type="EMBL" id="AE016879">
    <property type="protein sequence ID" value="AAP28535.1"/>
    <property type="molecule type" value="Genomic_DNA"/>
</dbReference>
<dbReference type="EMBL" id="AE017334">
    <property type="protein sequence ID" value="AAT33965.1"/>
    <property type="molecule type" value="Genomic_DNA"/>
</dbReference>
<dbReference type="EMBL" id="AE017225">
    <property type="protein sequence ID" value="AAT56793.1"/>
    <property type="molecule type" value="Genomic_DNA"/>
</dbReference>
<dbReference type="RefSeq" id="NP_847049.1">
    <property type="nucleotide sequence ID" value="NC_003997.3"/>
</dbReference>
<dbReference type="RefSeq" id="WP_000942874.1">
    <property type="nucleotide sequence ID" value="NZ_WXXJ01000026.1"/>
</dbReference>
<dbReference type="RefSeq" id="YP_030743.1">
    <property type="nucleotide sequence ID" value="NC_005945.1"/>
</dbReference>
<dbReference type="SMR" id="Q81KY8"/>
<dbReference type="IntAct" id="Q81KY8">
    <property type="interactions" value="1"/>
</dbReference>
<dbReference type="STRING" id="261594.GBAA_4846"/>
<dbReference type="DNASU" id="1083996"/>
<dbReference type="GeneID" id="45024472"/>
<dbReference type="KEGG" id="ban:BA_4846"/>
<dbReference type="KEGG" id="banh:HYU01_23620"/>
<dbReference type="KEGG" id="bar:GBAA_4846"/>
<dbReference type="KEGG" id="bat:BAS4495"/>
<dbReference type="PATRIC" id="fig|198094.11.peg.4807"/>
<dbReference type="eggNOG" id="COG0777">
    <property type="taxonomic scope" value="Bacteria"/>
</dbReference>
<dbReference type="HOGENOM" id="CLU_015486_1_1_9"/>
<dbReference type="OMA" id="PEGLWIK"/>
<dbReference type="OrthoDB" id="9772975at2"/>
<dbReference type="UniPathway" id="UPA00655">
    <property type="reaction ID" value="UER00711"/>
</dbReference>
<dbReference type="Proteomes" id="UP000000427">
    <property type="component" value="Chromosome"/>
</dbReference>
<dbReference type="Proteomes" id="UP000000594">
    <property type="component" value="Chromosome"/>
</dbReference>
<dbReference type="GO" id="GO:0009317">
    <property type="term" value="C:acetyl-CoA carboxylase complex"/>
    <property type="evidence" value="ECO:0007669"/>
    <property type="project" value="InterPro"/>
</dbReference>
<dbReference type="GO" id="GO:0003989">
    <property type="term" value="F:acetyl-CoA carboxylase activity"/>
    <property type="evidence" value="ECO:0007669"/>
    <property type="project" value="InterPro"/>
</dbReference>
<dbReference type="GO" id="GO:0005524">
    <property type="term" value="F:ATP binding"/>
    <property type="evidence" value="ECO:0007669"/>
    <property type="project" value="UniProtKB-KW"/>
</dbReference>
<dbReference type="GO" id="GO:0016743">
    <property type="term" value="F:carboxyl- or carbamoyltransferase activity"/>
    <property type="evidence" value="ECO:0007669"/>
    <property type="project" value="UniProtKB-UniRule"/>
</dbReference>
<dbReference type="GO" id="GO:0008270">
    <property type="term" value="F:zinc ion binding"/>
    <property type="evidence" value="ECO:0007669"/>
    <property type="project" value="UniProtKB-UniRule"/>
</dbReference>
<dbReference type="GO" id="GO:0006633">
    <property type="term" value="P:fatty acid biosynthetic process"/>
    <property type="evidence" value="ECO:0007669"/>
    <property type="project" value="UniProtKB-KW"/>
</dbReference>
<dbReference type="GO" id="GO:2001295">
    <property type="term" value="P:malonyl-CoA biosynthetic process"/>
    <property type="evidence" value="ECO:0007669"/>
    <property type="project" value="UniProtKB-UniRule"/>
</dbReference>
<dbReference type="Gene3D" id="3.90.226.10">
    <property type="entry name" value="2-enoyl-CoA Hydratase, Chain A, domain 1"/>
    <property type="match status" value="1"/>
</dbReference>
<dbReference type="HAMAP" id="MF_01395">
    <property type="entry name" value="AcetylCoA_CT_beta"/>
    <property type="match status" value="1"/>
</dbReference>
<dbReference type="InterPro" id="IPR034733">
    <property type="entry name" value="AcCoA_carboxyl_beta"/>
</dbReference>
<dbReference type="InterPro" id="IPR000438">
    <property type="entry name" value="Acetyl_CoA_COase_Trfase_b_su"/>
</dbReference>
<dbReference type="InterPro" id="IPR029045">
    <property type="entry name" value="ClpP/crotonase-like_dom_sf"/>
</dbReference>
<dbReference type="InterPro" id="IPR011762">
    <property type="entry name" value="COA_CT_N"/>
</dbReference>
<dbReference type="InterPro" id="IPR041010">
    <property type="entry name" value="Znf-ACC"/>
</dbReference>
<dbReference type="NCBIfam" id="TIGR00515">
    <property type="entry name" value="accD"/>
    <property type="match status" value="1"/>
</dbReference>
<dbReference type="PANTHER" id="PTHR42995">
    <property type="entry name" value="ACETYL-COENZYME A CARBOXYLASE CARBOXYL TRANSFERASE SUBUNIT BETA, CHLOROPLASTIC"/>
    <property type="match status" value="1"/>
</dbReference>
<dbReference type="PANTHER" id="PTHR42995:SF5">
    <property type="entry name" value="ACETYL-COENZYME A CARBOXYLASE CARBOXYL TRANSFERASE SUBUNIT BETA, CHLOROPLASTIC"/>
    <property type="match status" value="1"/>
</dbReference>
<dbReference type="Pfam" id="PF01039">
    <property type="entry name" value="Carboxyl_trans"/>
    <property type="match status" value="1"/>
</dbReference>
<dbReference type="Pfam" id="PF17848">
    <property type="entry name" value="Zn_ribbon_ACC"/>
    <property type="match status" value="1"/>
</dbReference>
<dbReference type="PRINTS" id="PR01070">
    <property type="entry name" value="ACCCTRFRASEB"/>
</dbReference>
<dbReference type="SUPFAM" id="SSF52096">
    <property type="entry name" value="ClpP/crotonase"/>
    <property type="match status" value="1"/>
</dbReference>
<dbReference type="PROSITE" id="PS50980">
    <property type="entry name" value="COA_CT_NTER"/>
    <property type="match status" value="1"/>
</dbReference>
<name>ACCD_BACAN</name>
<gene>
    <name evidence="1" type="primary">accD</name>
    <name type="ordered locus">BA_4846</name>
    <name type="ordered locus">GBAA_4846</name>
    <name type="ordered locus">BAS4495</name>
</gene>
<reference key="1">
    <citation type="journal article" date="2009" name="J. Bacteriol.">
        <title>The complete genome sequence of Bacillus anthracis Ames 'Ancestor'.</title>
        <authorList>
            <person name="Ravel J."/>
            <person name="Jiang L."/>
            <person name="Stanley S.T."/>
            <person name="Wilson M.R."/>
            <person name="Decker R.S."/>
            <person name="Read T.D."/>
            <person name="Worsham P."/>
            <person name="Keim P.S."/>
            <person name="Salzberg S.L."/>
            <person name="Fraser-Liggett C.M."/>
            <person name="Rasko D.A."/>
        </authorList>
    </citation>
    <scope>NUCLEOTIDE SEQUENCE [LARGE SCALE GENOMIC DNA]</scope>
    <source>
        <strain>Ames ancestor</strain>
    </source>
</reference>
<reference key="2">
    <citation type="journal article" date="2003" name="Nature">
        <title>The genome sequence of Bacillus anthracis Ames and comparison to closely related bacteria.</title>
        <authorList>
            <person name="Read T.D."/>
            <person name="Peterson S.N."/>
            <person name="Tourasse N.J."/>
            <person name="Baillie L.W."/>
            <person name="Paulsen I.T."/>
            <person name="Nelson K.E."/>
            <person name="Tettelin H."/>
            <person name="Fouts D.E."/>
            <person name="Eisen J.A."/>
            <person name="Gill S.R."/>
            <person name="Holtzapple E.K."/>
            <person name="Okstad O.A."/>
            <person name="Helgason E."/>
            <person name="Rilstone J."/>
            <person name="Wu M."/>
            <person name="Kolonay J.F."/>
            <person name="Beanan M.J."/>
            <person name="Dodson R.J."/>
            <person name="Brinkac L.M."/>
            <person name="Gwinn M.L."/>
            <person name="DeBoy R.T."/>
            <person name="Madpu R."/>
            <person name="Daugherty S.C."/>
            <person name="Durkin A.S."/>
            <person name="Haft D.H."/>
            <person name="Nelson W.C."/>
            <person name="Peterson J.D."/>
            <person name="Pop M."/>
            <person name="Khouri H.M."/>
            <person name="Radune D."/>
            <person name="Benton J.L."/>
            <person name="Mahamoud Y."/>
            <person name="Jiang L."/>
            <person name="Hance I.R."/>
            <person name="Weidman J.F."/>
            <person name="Berry K.J."/>
            <person name="Plaut R.D."/>
            <person name="Wolf A.M."/>
            <person name="Watkins K.L."/>
            <person name="Nierman W.C."/>
            <person name="Hazen A."/>
            <person name="Cline R.T."/>
            <person name="Redmond C."/>
            <person name="Thwaite J.E."/>
            <person name="White O."/>
            <person name="Salzberg S.L."/>
            <person name="Thomason B."/>
            <person name="Friedlander A.M."/>
            <person name="Koehler T.M."/>
            <person name="Hanna P.C."/>
            <person name="Kolstoe A.-B."/>
            <person name="Fraser C.M."/>
        </authorList>
    </citation>
    <scope>NUCLEOTIDE SEQUENCE [LARGE SCALE GENOMIC DNA]</scope>
    <source>
        <strain>Ames / isolate Porton</strain>
    </source>
</reference>
<reference key="3">
    <citation type="submission" date="2004-01" db="EMBL/GenBank/DDBJ databases">
        <title>Complete genome sequence of Bacillus anthracis Sterne.</title>
        <authorList>
            <person name="Brettin T.S."/>
            <person name="Bruce D."/>
            <person name="Challacombe J.F."/>
            <person name="Gilna P."/>
            <person name="Han C."/>
            <person name="Hill K."/>
            <person name="Hitchcock P."/>
            <person name="Jackson P."/>
            <person name="Keim P."/>
            <person name="Longmire J."/>
            <person name="Lucas S."/>
            <person name="Okinaka R."/>
            <person name="Richardson P."/>
            <person name="Rubin E."/>
            <person name="Tice H."/>
        </authorList>
    </citation>
    <scope>NUCLEOTIDE SEQUENCE [LARGE SCALE GENOMIC DNA]</scope>
    <source>
        <strain>Sterne</strain>
    </source>
</reference>
<evidence type="ECO:0000255" key="1">
    <source>
        <dbReference type="HAMAP-Rule" id="MF_01395"/>
    </source>
</evidence>
<evidence type="ECO:0000255" key="2">
    <source>
        <dbReference type="PROSITE-ProRule" id="PRU01136"/>
    </source>
</evidence>
<organism>
    <name type="scientific">Bacillus anthracis</name>
    <dbReference type="NCBI Taxonomy" id="1392"/>
    <lineage>
        <taxon>Bacteria</taxon>
        <taxon>Bacillati</taxon>
        <taxon>Bacillota</taxon>
        <taxon>Bacilli</taxon>
        <taxon>Bacillales</taxon>
        <taxon>Bacillaceae</taxon>
        <taxon>Bacillus</taxon>
        <taxon>Bacillus cereus group</taxon>
    </lineage>
</organism>
<feature type="chain" id="PRO_0000389669" description="Acetyl-coenzyme A carboxylase carboxyl transferase subunit beta">
    <location>
        <begin position="1"/>
        <end position="289"/>
    </location>
</feature>
<feature type="domain" description="CoA carboxyltransferase N-terminal" evidence="2">
    <location>
        <begin position="28"/>
        <end position="289"/>
    </location>
</feature>
<feature type="zinc finger region" description="C4-type" evidence="1">
    <location>
        <begin position="32"/>
        <end position="54"/>
    </location>
</feature>
<feature type="binding site" evidence="1">
    <location>
        <position position="32"/>
    </location>
    <ligand>
        <name>Zn(2+)</name>
        <dbReference type="ChEBI" id="CHEBI:29105"/>
    </ligand>
</feature>
<feature type="binding site" evidence="1">
    <location>
        <position position="35"/>
    </location>
    <ligand>
        <name>Zn(2+)</name>
        <dbReference type="ChEBI" id="CHEBI:29105"/>
    </ligand>
</feature>
<feature type="binding site" evidence="1">
    <location>
        <position position="51"/>
    </location>
    <ligand>
        <name>Zn(2+)</name>
        <dbReference type="ChEBI" id="CHEBI:29105"/>
    </ligand>
</feature>
<feature type="binding site" evidence="1">
    <location>
        <position position="54"/>
    </location>
    <ligand>
        <name>Zn(2+)</name>
        <dbReference type="ChEBI" id="CHEBI:29105"/>
    </ligand>
</feature>
<comment type="function">
    <text evidence="1">Component of the acetyl coenzyme A carboxylase (ACC) complex. Biotin carboxylase (BC) catalyzes the carboxylation of biotin on its carrier protein (BCCP) and then the CO(2) group is transferred by the transcarboxylase to acetyl-CoA to form malonyl-CoA.</text>
</comment>
<comment type="catalytic activity">
    <reaction evidence="1">
        <text>N(6)-carboxybiotinyl-L-lysyl-[protein] + acetyl-CoA = N(6)-biotinyl-L-lysyl-[protein] + malonyl-CoA</text>
        <dbReference type="Rhea" id="RHEA:54728"/>
        <dbReference type="Rhea" id="RHEA-COMP:10505"/>
        <dbReference type="Rhea" id="RHEA-COMP:10506"/>
        <dbReference type="ChEBI" id="CHEBI:57288"/>
        <dbReference type="ChEBI" id="CHEBI:57384"/>
        <dbReference type="ChEBI" id="CHEBI:83144"/>
        <dbReference type="ChEBI" id="CHEBI:83145"/>
        <dbReference type="EC" id="2.1.3.15"/>
    </reaction>
</comment>
<comment type="cofactor">
    <cofactor evidence="1">
        <name>Zn(2+)</name>
        <dbReference type="ChEBI" id="CHEBI:29105"/>
    </cofactor>
    <text evidence="1">Binds 1 zinc ion per subunit.</text>
</comment>
<comment type="pathway">
    <text evidence="1">Lipid metabolism; malonyl-CoA biosynthesis; malonyl-CoA from acetyl-CoA: step 1/1.</text>
</comment>
<comment type="subunit">
    <text evidence="1">Acetyl-CoA carboxylase is a heterohexamer composed of biotin carboxyl carrier protein (AccB), biotin carboxylase (AccC) and two subunits each of ACCase subunit alpha (AccA) and ACCase subunit beta (AccD).</text>
</comment>
<comment type="subcellular location">
    <subcellularLocation>
        <location evidence="1">Cytoplasm</location>
    </subcellularLocation>
</comment>
<comment type="similarity">
    <text evidence="1">Belongs to the AccD/PCCB family.</text>
</comment>
<proteinExistence type="inferred from homology"/>
<accession>Q81KY8</accession>
<accession>Q6HSE5</accession>
<accession>Q6KLP0</accession>
<keyword id="KW-0067">ATP-binding</keyword>
<keyword id="KW-0963">Cytoplasm</keyword>
<keyword id="KW-0275">Fatty acid biosynthesis</keyword>
<keyword id="KW-0276">Fatty acid metabolism</keyword>
<keyword id="KW-0444">Lipid biosynthesis</keyword>
<keyword id="KW-0443">Lipid metabolism</keyword>
<keyword id="KW-0479">Metal-binding</keyword>
<keyword id="KW-0547">Nucleotide-binding</keyword>
<keyword id="KW-1185">Reference proteome</keyword>
<keyword id="KW-0808">Transferase</keyword>
<keyword id="KW-0862">Zinc</keyword>
<keyword id="KW-0863">Zinc-finger</keyword>
<sequence length="289" mass="32281">MLRDLFVKKKKYAAIPSEQVRKDVPDGVMTKCPKCKKIMYTKEVLKNLKVCVNCGYHHPMNAWERLDSILDEGSFREYDKEMVSLNPLEFPNYEEKLESDRKKTELNEAVVTGEGTIDDMLVVVAVMDSRFRMGSMGSVVGEKIARAVEKAYDLQVPFIIFTASGGARMQEGILSLMQMAKTSVALKKHSNAGGLFISVMTHPTTGGVSASFASLGDYNLAEPGALIGFAGRRVIEQTVREKLPEDFQTAEFLLEHGQLDAVVHRDDMRESLRKILEVHQGGEMAVWQS</sequence>